<accession>Q324Z5</accession>
<dbReference type="EMBL" id="CP000036">
    <property type="protein sequence ID" value="ABB65113.1"/>
    <property type="status" value="ALT_INIT"/>
    <property type="molecule type" value="Genomic_DNA"/>
</dbReference>
<dbReference type="SMR" id="Q324Z5"/>
<dbReference type="KEGG" id="sbo:SBO_0404"/>
<dbReference type="HOGENOM" id="CLU_067821_0_1_6"/>
<dbReference type="Proteomes" id="UP000007067">
    <property type="component" value="Chromosome"/>
</dbReference>
<dbReference type="InterPro" id="IPR009057">
    <property type="entry name" value="Homeodomain-like_sf"/>
</dbReference>
<dbReference type="Pfam" id="PF13551">
    <property type="entry name" value="HTH_29"/>
    <property type="match status" value="1"/>
</dbReference>
<dbReference type="SUPFAM" id="SSF46689">
    <property type="entry name" value="Homeodomain-like"/>
    <property type="match status" value="1"/>
</dbReference>
<proteinExistence type="predicted"/>
<reference key="1">
    <citation type="journal article" date="2005" name="Nucleic Acids Res.">
        <title>Genome dynamics and diversity of Shigella species, the etiologic agents of bacillary dysentery.</title>
        <authorList>
            <person name="Yang F."/>
            <person name="Yang J."/>
            <person name="Zhang X."/>
            <person name="Chen L."/>
            <person name="Jiang Y."/>
            <person name="Yan Y."/>
            <person name="Tang X."/>
            <person name="Wang J."/>
            <person name="Xiong Z."/>
            <person name="Dong J."/>
            <person name="Xue Y."/>
            <person name="Zhu Y."/>
            <person name="Xu X."/>
            <person name="Sun L."/>
            <person name="Chen S."/>
            <person name="Nie H."/>
            <person name="Peng J."/>
            <person name="Xu J."/>
            <person name="Wang Y."/>
            <person name="Yuan Z."/>
            <person name="Wen Y."/>
            <person name="Yao Z."/>
            <person name="Shen Y."/>
            <person name="Qiang B."/>
            <person name="Hou Y."/>
            <person name="Yu J."/>
            <person name="Jin Q."/>
        </authorList>
    </citation>
    <scope>NUCLEOTIDE SEQUENCE [LARGE SCALE GENOMIC DNA]</scope>
    <source>
        <strain>Sb227</strain>
    </source>
</reference>
<sequence length="123" mass="13874">MLHTANPVIKHKAGLLNLAEELSNVSKACKIMGVSRDTFYRYRELVAEGGVDAQINRSRRAPNLKNRTDEATEQAVVDYAVAFPTHGQHRASNELRKQGGFISDSGVRSVWLLHNLENLKRRY</sequence>
<evidence type="ECO:0000305" key="1"/>
<feature type="chain" id="PRO_0000248936" description="Uncharacterized protein YlbG">
    <location>
        <begin position="1"/>
        <end position="123"/>
    </location>
</feature>
<name>YLBG_SHIBS</name>
<gene>
    <name type="primary">ylbG</name>
    <name type="ordered locus">SBO_0404</name>
</gene>
<organism>
    <name type="scientific">Shigella boydii serotype 4 (strain Sb227)</name>
    <dbReference type="NCBI Taxonomy" id="300268"/>
    <lineage>
        <taxon>Bacteria</taxon>
        <taxon>Pseudomonadati</taxon>
        <taxon>Pseudomonadota</taxon>
        <taxon>Gammaproteobacteria</taxon>
        <taxon>Enterobacterales</taxon>
        <taxon>Enterobacteriaceae</taxon>
        <taxon>Shigella</taxon>
    </lineage>
</organism>
<comment type="sequence caution" evidence="1">
    <conflict type="erroneous initiation">
        <sequence resource="EMBL-CDS" id="ABB65113"/>
    </conflict>
</comment>
<protein>
    <recommendedName>
        <fullName>Uncharacterized protein YlbG</fullName>
    </recommendedName>
</protein>